<protein>
    <recommendedName>
        <fullName evidence="1">Acyl carrier protein</fullName>
        <shortName evidence="1">ACP</shortName>
    </recommendedName>
</protein>
<keyword id="KW-0963">Cytoplasm</keyword>
<keyword id="KW-0275">Fatty acid biosynthesis</keyword>
<keyword id="KW-0276">Fatty acid metabolism</keyword>
<keyword id="KW-0444">Lipid biosynthesis</keyword>
<keyword id="KW-0443">Lipid metabolism</keyword>
<keyword id="KW-0596">Phosphopantetheine</keyword>
<keyword id="KW-0597">Phosphoprotein</keyword>
<keyword id="KW-1185">Reference proteome</keyword>
<comment type="function">
    <text evidence="1">Carrier of the growing fatty acid chain in fatty acid biosynthesis.</text>
</comment>
<comment type="pathway">
    <text evidence="1">Lipid metabolism; fatty acid biosynthesis.</text>
</comment>
<comment type="subcellular location">
    <subcellularLocation>
        <location evidence="1">Cytoplasm</location>
    </subcellularLocation>
</comment>
<comment type="PTM">
    <text evidence="1">4'-phosphopantetheine is transferred from CoA to a specific serine of apo-ACP by AcpS. This modification is essential for activity because fatty acids are bound in thioester linkage to the sulfhydryl of the prosthetic group.</text>
</comment>
<comment type="similarity">
    <text evidence="1">Belongs to the acyl carrier protein (ACP) family.</text>
</comment>
<evidence type="ECO:0000255" key="1">
    <source>
        <dbReference type="HAMAP-Rule" id="MF_01217"/>
    </source>
</evidence>
<evidence type="ECO:0000255" key="2">
    <source>
        <dbReference type="PROSITE-ProRule" id="PRU00258"/>
    </source>
</evidence>
<name>ACP_POLNA</name>
<proteinExistence type="inferred from homology"/>
<sequence length="79" mass="8634">MSDIEARVKKIIAEQLGVEEGQVTSEKSFVADLGADSLDTVELVMALEDEFGIEIPDEDAEKITTVQNAIDYANTHHKA</sequence>
<accession>A1VRU2</accession>
<dbReference type="EMBL" id="CP000529">
    <property type="protein sequence ID" value="ABM38370.1"/>
    <property type="molecule type" value="Genomic_DNA"/>
</dbReference>
<dbReference type="RefSeq" id="WP_011802442.1">
    <property type="nucleotide sequence ID" value="NC_008781.1"/>
</dbReference>
<dbReference type="SMR" id="A1VRU2"/>
<dbReference type="STRING" id="365044.Pnap_3071"/>
<dbReference type="KEGG" id="pna:Pnap_3071"/>
<dbReference type="eggNOG" id="COG0236">
    <property type="taxonomic scope" value="Bacteria"/>
</dbReference>
<dbReference type="HOGENOM" id="CLU_108696_5_1_4"/>
<dbReference type="OrthoDB" id="9804551at2"/>
<dbReference type="UniPathway" id="UPA00094"/>
<dbReference type="Proteomes" id="UP000000644">
    <property type="component" value="Chromosome"/>
</dbReference>
<dbReference type="GO" id="GO:0005829">
    <property type="term" value="C:cytosol"/>
    <property type="evidence" value="ECO:0007669"/>
    <property type="project" value="TreeGrafter"/>
</dbReference>
<dbReference type="GO" id="GO:0016020">
    <property type="term" value="C:membrane"/>
    <property type="evidence" value="ECO:0007669"/>
    <property type="project" value="GOC"/>
</dbReference>
<dbReference type="GO" id="GO:0000035">
    <property type="term" value="F:acyl binding"/>
    <property type="evidence" value="ECO:0007669"/>
    <property type="project" value="TreeGrafter"/>
</dbReference>
<dbReference type="GO" id="GO:0000036">
    <property type="term" value="F:acyl carrier activity"/>
    <property type="evidence" value="ECO:0007669"/>
    <property type="project" value="UniProtKB-UniRule"/>
</dbReference>
<dbReference type="GO" id="GO:0031177">
    <property type="term" value="F:phosphopantetheine binding"/>
    <property type="evidence" value="ECO:0007669"/>
    <property type="project" value="InterPro"/>
</dbReference>
<dbReference type="GO" id="GO:0009245">
    <property type="term" value="P:lipid A biosynthetic process"/>
    <property type="evidence" value="ECO:0007669"/>
    <property type="project" value="TreeGrafter"/>
</dbReference>
<dbReference type="FunFam" id="1.10.1200.10:FF:000001">
    <property type="entry name" value="Acyl carrier protein"/>
    <property type="match status" value="1"/>
</dbReference>
<dbReference type="Gene3D" id="1.10.1200.10">
    <property type="entry name" value="ACP-like"/>
    <property type="match status" value="1"/>
</dbReference>
<dbReference type="HAMAP" id="MF_01217">
    <property type="entry name" value="Acyl_carrier"/>
    <property type="match status" value="1"/>
</dbReference>
<dbReference type="InterPro" id="IPR003231">
    <property type="entry name" value="ACP"/>
</dbReference>
<dbReference type="InterPro" id="IPR036736">
    <property type="entry name" value="ACP-like_sf"/>
</dbReference>
<dbReference type="InterPro" id="IPR020806">
    <property type="entry name" value="PKS_PP-bd"/>
</dbReference>
<dbReference type="InterPro" id="IPR009081">
    <property type="entry name" value="PP-bd_ACP"/>
</dbReference>
<dbReference type="InterPro" id="IPR006162">
    <property type="entry name" value="Ppantetheine_attach_site"/>
</dbReference>
<dbReference type="NCBIfam" id="TIGR00517">
    <property type="entry name" value="acyl_carrier"/>
    <property type="match status" value="1"/>
</dbReference>
<dbReference type="NCBIfam" id="NF002148">
    <property type="entry name" value="PRK00982.1-2"/>
    <property type="match status" value="1"/>
</dbReference>
<dbReference type="NCBIfam" id="NF002149">
    <property type="entry name" value="PRK00982.1-3"/>
    <property type="match status" value="1"/>
</dbReference>
<dbReference type="NCBIfam" id="NF002150">
    <property type="entry name" value="PRK00982.1-4"/>
    <property type="match status" value="1"/>
</dbReference>
<dbReference type="NCBIfam" id="NF002151">
    <property type="entry name" value="PRK00982.1-5"/>
    <property type="match status" value="1"/>
</dbReference>
<dbReference type="PANTHER" id="PTHR20863">
    <property type="entry name" value="ACYL CARRIER PROTEIN"/>
    <property type="match status" value="1"/>
</dbReference>
<dbReference type="PANTHER" id="PTHR20863:SF76">
    <property type="entry name" value="CARRIER DOMAIN-CONTAINING PROTEIN"/>
    <property type="match status" value="1"/>
</dbReference>
<dbReference type="Pfam" id="PF00550">
    <property type="entry name" value="PP-binding"/>
    <property type="match status" value="1"/>
</dbReference>
<dbReference type="SMART" id="SM00823">
    <property type="entry name" value="PKS_PP"/>
    <property type="match status" value="1"/>
</dbReference>
<dbReference type="SUPFAM" id="SSF47336">
    <property type="entry name" value="ACP-like"/>
    <property type="match status" value="1"/>
</dbReference>
<dbReference type="PROSITE" id="PS50075">
    <property type="entry name" value="CARRIER"/>
    <property type="match status" value="1"/>
</dbReference>
<dbReference type="PROSITE" id="PS00012">
    <property type="entry name" value="PHOSPHOPANTETHEINE"/>
    <property type="match status" value="1"/>
</dbReference>
<organism>
    <name type="scientific">Polaromonas naphthalenivorans (strain CJ2)</name>
    <dbReference type="NCBI Taxonomy" id="365044"/>
    <lineage>
        <taxon>Bacteria</taxon>
        <taxon>Pseudomonadati</taxon>
        <taxon>Pseudomonadota</taxon>
        <taxon>Betaproteobacteria</taxon>
        <taxon>Burkholderiales</taxon>
        <taxon>Comamonadaceae</taxon>
        <taxon>Polaromonas</taxon>
    </lineage>
</organism>
<feature type="chain" id="PRO_1000066649" description="Acyl carrier protein">
    <location>
        <begin position="1"/>
        <end position="79"/>
    </location>
</feature>
<feature type="domain" description="Carrier" evidence="2">
    <location>
        <begin position="2"/>
        <end position="77"/>
    </location>
</feature>
<feature type="modified residue" description="O-(pantetheine 4'-phosphoryl)serine" evidence="2">
    <location>
        <position position="37"/>
    </location>
</feature>
<gene>
    <name evidence="1" type="primary">acpP</name>
    <name type="ordered locus">Pnap_3071</name>
</gene>
<reference key="1">
    <citation type="journal article" date="2009" name="Environ. Microbiol.">
        <title>The genome of Polaromonas naphthalenivorans strain CJ2, isolated from coal tar-contaminated sediment, reveals physiological and metabolic versatility and evolution through extensive horizontal gene transfer.</title>
        <authorList>
            <person name="Yagi J.M."/>
            <person name="Sims D."/>
            <person name="Brettin T."/>
            <person name="Bruce D."/>
            <person name="Madsen E.L."/>
        </authorList>
    </citation>
    <scope>NUCLEOTIDE SEQUENCE [LARGE SCALE GENOMIC DNA]</scope>
    <source>
        <strain>CJ2</strain>
    </source>
</reference>